<organism>
    <name type="scientific">Sodalis glossinidius (strain morsitans)</name>
    <dbReference type="NCBI Taxonomy" id="343509"/>
    <lineage>
        <taxon>Bacteria</taxon>
        <taxon>Pseudomonadati</taxon>
        <taxon>Pseudomonadota</taxon>
        <taxon>Gammaproteobacteria</taxon>
        <taxon>Enterobacterales</taxon>
        <taxon>Bruguierivoracaceae</taxon>
        <taxon>Sodalis</taxon>
    </lineage>
</organism>
<name>RL16_SODGM</name>
<comment type="function">
    <text evidence="1">Binds 23S rRNA and is also seen to make contacts with the A and possibly P site tRNAs.</text>
</comment>
<comment type="subunit">
    <text evidence="1">Part of the 50S ribosomal subunit.</text>
</comment>
<comment type="similarity">
    <text evidence="1">Belongs to the universal ribosomal protein uL16 family.</text>
</comment>
<proteinExistence type="inferred from homology"/>
<sequence>MLQPKRTKFRKMHKGRNRGLAVGTDVSFGTFGLKAVGRGRLTARQIEAARRAMTRAVKRQGKIWIRIFPDKPITEKPLEVRMGKGKGNVEYWVALIQPGKVLYEMDGVPEELAREAFKLAAAKLPIKTTFVTKTVM</sequence>
<keyword id="KW-0687">Ribonucleoprotein</keyword>
<keyword id="KW-0689">Ribosomal protein</keyword>
<keyword id="KW-0694">RNA-binding</keyword>
<keyword id="KW-0699">rRNA-binding</keyword>
<keyword id="KW-0820">tRNA-binding</keyword>
<dbReference type="EMBL" id="AP008232">
    <property type="protein sequence ID" value="BAE75546.1"/>
    <property type="molecule type" value="Genomic_DNA"/>
</dbReference>
<dbReference type="RefSeq" id="WP_011412081.1">
    <property type="nucleotide sequence ID" value="NC_007712.1"/>
</dbReference>
<dbReference type="SMR" id="Q2NQM9"/>
<dbReference type="STRING" id="343509.SG2271"/>
<dbReference type="KEGG" id="sgl:SG2271"/>
<dbReference type="eggNOG" id="COG0197">
    <property type="taxonomic scope" value="Bacteria"/>
</dbReference>
<dbReference type="HOGENOM" id="CLU_078858_2_1_6"/>
<dbReference type="OrthoDB" id="9802589at2"/>
<dbReference type="BioCyc" id="SGLO343509:SGP1_RS20805-MONOMER"/>
<dbReference type="Proteomes" id="UP000001932">
    <property type="component" value="Chromosome"/>
</dbReference>
<dbReference type="GO" id="GO:0022625">
    <property type="term" value="C:cytosolic large ribosomal subunit"/>
    <property type="evidence" value="ECO:0007669"/>
    <property type="project" value="TreeGrafter"/>
</dbReference>
<dbReference type="GO" id="GO:0019843">
    <property type="term" value="F:rRNA binding"/>
    <property type="evidence" value="ECO:0007669"/>
    <property type="project" value="UniProtKB-UniRule"/>
</dbReference>
<dbReference type="GO" id="GO:0003735">
    <property type="term" value="F:structural constituent of ribosome"/>
    <property type="evidence" value="ECO:0007669"/>
    <property type="project" value="InterPro"/>
</dbReference>
<dbReference type="GO" id="GO:0000049">
    <property type="term" value="F:tRNA binding"/>
    <property type="evidence" value="ECO:0007669"/>
    <property type="project" value="UniProtKB-KW"/>
</dbReference>
<dbReference type="GO" id="GO:0006412">
    <property type="term" value="P:translation"/>
    <property type="evidence" value="ECO:0007669"/>
    <property type="project" value="UniProtKB-UniRule"/>
</dbReference>
<dbReference type="CDD" id="cd01433">
    <property type="entry name" value="Ribosomal_L16_L10e"/>
    <property type="match status" value="1"/>
</dbReference>
<dbReference type="FunFam" id="3.90.1170.10:FF:000001">
    <property type="entry name" value="50S ribosomal protein L16"/>
    <property type="match status" value="1"/>
</dbReference>
<dbReference type="Gene3D" id="3.90.1170.10">
    <property type="entry name" value="Ribosomal protein L10e/L16"/>
    <property type="match status" value="1"/>
</dbReference>
<dbReference type="HAMAP" id="MF_01342">
    <property type="entry name" value="Ribosomal_uL16"/>
    <property type="match status" value="1"/>
</dbReference>
<dbReference type="InterPro" id="IPR047873">
    <property type="entry name" value="Ribosomal_uL16"/>
</dbReference>
<dbReference type="InterPro" id="IPR000114">
    <property type="entry name" value="Ribosomal_uL16_bact-type"/>
</dbReference>
<dbReference type="InterPro" id="IPR020798">
    <property type="entry name" value="Ribosomal_uL16_CS"/>
</dbReference>
<dbReference type="InterPro" id="IPR016180">
    <property type="entry name" value="Ribosomal_uL16_dom"/>
</dbReference>
<dbReference type="InterPro" id="IPR036920">
    <property type="entry name" value="Ribosomal_uL16_sf"/>
</dbReference>
<dbReference type="NCBIfam" id="TIGR01164">
    <property type="entry name" value="rplP_bact"/>
    <property type="match status" value="1"/>
</dbReference>
<dbReference type="PANTHER" id="PTHR12220">
    <property type="entry name" value="50S/60S RIBOSOMAL PROTEIN L16"/>
    <property type="match status" value="1"/>
</dbReference>
<dbReference type="PANTHER" id="PTHR12220:SF13">
    <property type="entry name" value="LARGE RIBOSOMAL SUBUNIT PROTEIN UL16M"/>
    <property type="match status" value="1"/>
</dbReference>
<dbReference type="Pfam" id="PF00252">
    <property type="entry name" value="Ribosomal_L16"/>
    <property type="match status" value="1"/>
</dbReference>
<dbReference type="PRINTS" id="PR00060">
    <property type="entry name" value="RIBOSOMALL16"/>
</dbReference>
<dbReference type="SUPFAM" id="SSF54686">
    <property type="entry name" value="Ribosomal protein L16p/L10e"/>
    <property type="match status" value="1"/>
</dbReference>
<dbReference type="PROSITE" id="PS00586">
    <property type="entry name" value="RIBOSOMAL_L16_1"/>
    <property type="match status" value="1"/>
</dbReference>
<dbReference type="PROSITE" id="PS00701">
    <property type="entry name" value="RIBOSOMAL_L16_2"/>
    <property type="match status" value="1"/>
</dbReference>
<reference key="1">
    <citation type="journal article" date="2006" name="Genome Res.">
        <title>Massive genome erosion and functional adaptations provide insights into the symbiotic lifestyle of Sodalis glossinidius in the tsetse host.</title>
        <authorList>
            <person name="Toh H."/>
            <person name="Weiss B.L."/>
            <person name="Perkin S.A.H."/>
            <person name="Yamashita A."/>
            <person name="Oshima K."/>
            <person name="Hattori M."/>
            <person name="Aksoy S."/>
        </authorList>
    </citation>
    <scope>NUCLEOTIDE SEQUENCE [LARGE SCALE GENOMIC DNA]</scope>
    <source>
        <strain>morsitans</strain>
    </source>
</reference>
<protein>
    <recommendedName>
        <fullName evidence="1">Large ribosomal subunit protein uL16</fullName>
    </recommendedName>
    <alternativeName>
        <fullName evidence="2">50S ribosomal protein L16</fullName>
    </alternativeName>
</protein>
<accession>Q2NQM9</accession>
<evidence type="ECO:0000255" key="1">
    <source>
        <dbReference type="HAMAP-Rule" id="MF_01342"/>
    </source>
</evidence>
<evidence type="ECO:0000305" key="2"/>
<gene>
    <name evidence="1" type="primary">rplP</name>
    <name type="ordered locus">SG2271</name>
</gene>
<feature type="chain" id="PRO_0000251672" description="Large ribosomal subunit protein uL16">
    <location>
        <begin position="1"/>
        <end position="136"/>
    </location>
</feature>